<keyword id="KW-0238">DNA-binding</keyword>
<keyword id="KW-0539">Nucleus</keyword>
<keyword id="KW-1185">Reference proteome</keyword>
<sequence>MTAEVQQPSVQTPAHSSPMTEKPVQTPVMETSSSSSSTKAKKTNAGIRRPEKPPYSYIALIVMAIQSSPTKRLTLSEIYQFLQSRFPFFRGSYQGWKNSVRHNLSLNECFIKLPKGLGRPGKGHYWTIDPASEFMFEEGSFRRRPRGFRRKCQALKPSMYSMMNGLGFNHIPESYNFQGGGGGLSCPPNSLSLESGIGMMNGHLASNMEGMGLAGHSMPHLSTNSGHSYMGSCTGSSGTEYPHHDSSASPLLTSGGVMDPHAVYSSTASAWPSAPPTSLNNGTSYIKQQPLSPCNPGASSLQPSLPTHSLEQSYLHQNGHGTTDLQGIPRYHTQSPSMCDRKEFVFSFNAMTSSSMHSPGSSSYYHHQQVSYQDIKPCVM</sequence>
<protein>
    <recommendedName>
        <fullName>Forkhead box protein F1</fullName>
    </recommendedName>
</protein>
<proteinExistence type="evidence at transcript level"/>
<organism>
    <name type="scientific">Danio rerio</name>
    <name type="common">Zebrafish</name>
    <name type="synonym">Brachydanio rerio</name>
    <dbReference type="NCBI Taxonomy" id="7955"/>
    <lineage>
        <taxon>Eukaryota</taxon>
        <taxon>Metazoa</taxon>
        <taxon>Chordata</taxon>
        <taxon>Craniata</taxon>
        <taxon>Vertebrata</taxon>
        <taxon>Euteleostomi</taxon>
        <taxon>Actinopterygii</taxon>
        <taxon>Neopterygii</taxon>
        <taxon>Teleostei</taxon>
        <taxon>Ostariophysi</taxon>
        <taxon>Cypriniformes</taxon>
        <taxon>Danionidae</taxon>
        <taxon>Danioninae</taxon>
        <taxon>Danio</taxon>
    </lineage>
</organism>
<accession>A1L1S5</accession>
<dbReference type="EMBL" id="BX571798">
    <property type="protein sequence ID" value="CAM56581.1"/>
    <property type="molecule type" value="Genomic_DNA"/>
</dbReference>
<dbReference type="EMBL" id="BC129194">
    <property type="protein sequence ID" value="AAI29195.1"/>
    <property type="molecule type" value="mRNA"/>
</dbReference>
<dbReference type="RefSeq" id="NP_001073655.1">
    <property type="nucleotide sequence ID" value="NM_001080186.1"/>
</dbReference>
<dbReference type="SMR" id="A1L1S5"/>
<dbReference type="FunCoup" id="A1L1S5">
    <property type="interactions" value="94"/>
</dbReference>
<dbReference type="STRING" id="7955.ENSDARP00000022888"/>
<dbReference type="PaxDb" id="7955-ENSDARP00000022888"/>
<dbReference type="PeptideAtlas" id="A1L1S5"/>
<dbReference type="Ensembl" id="ENSDART00000012374">
    <property type="protein sequence ID" value="ENSDARP00000022888"/>
    <property type="gene ID" value="ENSDARG00000015399"/>
</dbReference>
<dbReference type="GeneID" id="566407"/>
<dbReference type="KEGG" id="dre:566407"/>
<dbReference type="AGR" id="ZFIN:ZDB-GENE-050419-153"/>
<dbReference type="CTD" id="2294"/>
<dbReference type="ZFIN" id="ZDB-GENE-050419-153">
    <property type="gene designation" value="foxf1"/>
</dbReference>
<dbReference type="eggNOG" id="KOG2294">
    <property type="taxonomic scope" value="Eukaryota"/>
</dbReference>
<dbReference type="HOGENOM" id="CLU_039845_1_0_1"/>
<dbReference type="InParanoid" id="A1L1S5"/>
<dbReference type="OMA" id="KPHGQTA"/>
<dbReference type="OrthoDB" id="5954824at2759"/>
<dbReference type="PhylomeDB" id="A1L1S5"/>
<dbReference type="TreeFam" id="TF351598"/>
<dbReference type="PRO" id="PR:A1L1S5"/>
<dbReference type="Proteomes" id="UP000000437">
    <property type="component" value="Chromosome 18"/>
</dbReference>
<dbReference type="Bgee" id="ENSDARG00000015399">
    <property type="expression patterns" value="Expressed in pharyngeal gill and 16 other cell types or tissues"/>
</dbReference>
<dbReference type="GO" id="GO:0005634">
    <property type="term" value="C:nucleus"/>
    <property type="evidence" value="ECO:0000318"/>
    <property type="project" value="GO_Central"/>
</dbReference>
<dbReference type="GO" id="GO:0000981">
    <property type="term" value="F:DNA-binding transcription factor activity, RNA polymerase II-specific"/>
    <property type="evidence" value="ECO:0000318"/>
    <property type="project" value="GO_Central"/>
</dbReference>
<dbReference type="GO" id="GO:0000978">
    <property type="term" value="F:RNA polymerase II cis-regulatory region sequence-specific DNA binding"/>
    <property type="evidence" value="ECO:0000318"/>
    <property type="project" value="GO_Central"/>
</dbReference>
<dbReference type="GO" id="GO:0009887">
    <property type="term" value="P:animal organ morphogenesis"/>
    <property type="evidence" value="ECO:0000318"/>
    <property type="project" value="GO_Central"/>
</dbReference>
<dbReference type="GO" id="GO:0006357">
    <property type="term" value="P:regulation of transcription by RNA polymerase II"/>
    <property type="evidence" value="ECO:0000318"/>
    <property type="project" value="GO_Central"/>
</dbReference>
<dbReference type="GO" id="GO:0002040">
    <property type="term" value="P:sprouting angiogenesis"/>
    <property type="evidence" value="ECO:0000315"/>
    <property type="project" value="ZFIN"/>
</dbReference>
<dbReference type="CDD" id="cd20049">
    <property type="entry name" value="FH_FOXF1"/>
    <property type="match status" value="1"/>
</dbReference>
<dbReference type="FunFam" id="1.10.10.10:FF:000071">
    <property type="entry name" value="Forkhead box F1"/>
    <property type="match status" value="1"/>
</dbReference>
<dbReference type="Gene3D" id="1.10.10.10">
    <property type="entry name" value="Winged helix-like DNA-binding domain superfamily/Winged helix DNA-binding domain"/>
    <property type="match status" value="1"/>
</dbReference>
<dbReference type="InterPro" id="IPR001766">
    <property type="entry name" value="Fork_head_dom"/>
</dbReference>
<dbReference type="InterPro" id="IPR051770">
    <property type="entry name" value="Forkhead_box_regulator"/>
</dbReference>
<dbReference type="InterPro" id="IPR018122">
    <property type="entry name" value="TF_fork_head_CS_1"/>
</dbReference>
<dbReference type="InterPro" id="IPR030456">
    <property type="entry name" value="TF_fork_head_CS_2"/>
</dbReference>
<dbReference type="InterPro" id="IPR036388">
    <property type="entry name" value="WH-like_DNA-bd_sf"/>
</dbReference>
<dbReference type="InterPro" id="IPR036390">
    <property type="entry name" value="WH_DNA-bd_sf"/>
</dbReference>
<dbReference type="PANTHER" id="PTHR46262">
    <property type="entry name" value="FORKHEAD BOX PROTEIN BINIOU"/>
    <property type="match status" value="1"/>
</dbReference>
<dbReference type="PANTHER" id="PTHR46262:SF1">
    <property type="entry name" value="FORKHEAD BOX PROTEIN F1"/>
    <property type="match status" value="1"/>
</dbReference>
<dbReference type="Pfam" id="PF00250">
    <property type="entry name" value="Forkhead"/>
    <property type="match status" value="1"/>
</dbReference>
<dbReference type="PRINTS" id="PR00053">
    <property type="entry name" value="FORKHEAD"/>
</dbReference>
<dbReference type="SMART" id="SM00339">
    <property type="entry name" value="FH"/>
    <property type="match status" value="1"/>
</dbReference>
<dbReference type="SUPFAM" id="SSF46785">
    <property type="entry name" value="Winged helix' DNA-binding domain"/>
    <property type="match status" value="1"/>
</dbReference>
<dbReference type="PROSITE" id="PS00657">
    <property type="entry name" value="FORK_HEAD_1"/>
    <property type="match status" value="1"/>
</dbReference>
<dbReference type="PROSITE" id="PS00658">
    <property type="entry name" value="FORK_HEAD_2"/>
    <property type="match status" value="1"/>
</dbReference>
<dbReference type="PROSITE" id="PS50039">
    <property type="entry name" value="FORK_HEAD_3"/>
    <property type="match status" value="1"/>
</dbReference>
<reference key="1">
    <citation type="journal article" date="2013" name="Nature">
        <title>The zebrafish reference genome sequence and its relationship to the human genome.</title>
        <authorList>
            <person name="Howe K."/>
            <person name="Clark M.D."/>
            <person name="Torroja C.F."/>
            <person name="Torrance J."/>
            <person name="Berthelot C."/>
            <person name="Muffato M."/>
            <person name="Collins J.E."/>
            <person name="Humphray S."/>
            <person name="McLaren K."/>
            <person name="Matthews L."/>
            <person name="McLaren S."/>
            <person name="Sealy I."/>
            <person name="Caccamo M."/>
            <person name="Churcher C."/>
            <person name="Scott C."/>
            <person name="Barrett J.C."/>
            <person name="Koch R."/>
            <person name="Rauch G.J."/>
            <person name="White S."/>
            <person name="Chow W."/>
            <person name="Kilian B."/>
            <person name="Quintais L.T."/>
            <person name="Guerra-Assuncao J.A."/>
            <person name="Zhou Y."/>
            <person name="Gu Y."/>
            <person name="Yen J."/>
            <person name="Vogel J.H."/>
            <person name="Eyre T."/>
            <person name="Redmond S."/>
            <person name="Banerjee R."/>
            <person name="Chi J."/>
            <person name="Fu B."/>
            <person name="Langley E."/>
            <person name="Maguire S.F."/>
            <person name="Laird G.K."/>
            <person name="Lloyd D."/>
            <person name="Kenyon E."/>
            <person name="Donaldson S."/>
            <person name="Sehra H."/>
            <person name="Almeida-King J."/>
            <person name="Loveland J."/>
            <person name="Trevanion S."/>
            <person name="Jones M."/>
            <person name="Quail M."/>
            <person name="Willey D."/>
            <person name="Hunt A."/>
            <person name="Burton J."/>
            <person name="Sims S."/>
            <person name="McLay K."/>
            <person name="Plumb B."/>
            <person name="Davis J."/>
            <person name="Clee C."/>
            <person name="Oliver K."/>
            <person name="Clark R."/>
            <person name="Riddle C."/>
            <person name="Elliot D."/>
            <person name="Threadgold G."/>
            <person name="Harden G."/>
            <person name="Ware D."/>
            <person name="Begum S."/>
            <person name="Mortimore B."/>
            <person name="Kerry G."/>
            <person name="Heath P."/>
            <person name="Phillimore B."/>
            <person name="Tracey A."/>
            <person name="Corby N."/>
            <person name="Dunn M."/>
            <person name="Johnson C."/>
            <person name="Wood J."/>
            <person name="Clark S."/>
            <person name="Pelan S."/>
            <person name="Griffiths G."/>
            <person name="Smith M."/>
            <person name="Glithero R."/>
            <person name="Howden P."/>
            <person name="Barker N."/>
            <person name="Lloyd C."/>
            <person name="Stevens C."/>
            <person name="Harley J."/>
            <person name="Holt K."/>
            <person name="Panagiotidis G."/>
            <person name="Lovell J."/>
            <person name="Beasley H."/>
            <person name="Henderson C."/>
            <person name="Gordon D."/>
            <person name="Auger K."/>
            <person name="Wright D."/>
            <person name="Collins J."/>
            <person name="Raisen C."/>
            <person name="Dyer L."/>
            <person name="Leung K."/>
            <person name="Robertson L."/>
            <person name="Ambridge K."/>
            <person name="Leongamornlert D."/>
            <person name="McGuire S."/>
            <person name="Gilderthorp R."/>
            <person name="Griffiths C."/>
            <person name="Manthravadi D."/>
            <person name="Nichol S."/>
            <person name="Barker G."/>
            <person name="Whitehead S."/>
            <person name="Kay M."/>
            <person name="Brown J."/>
            <person name="Murnane C."/>
            <person name="Gray E."/>
            <person name="Humphries M."/>
            <person name="Sycamore N."/>
            <person name="Barker D."/>
            <person name="Saunders D."/>
            <person name="Wallis J."/>
            <person name="Babbage A."/>
            <person name="Hammond S."/>
            <person name="Mashreghi-Mohammadi M."/>
            <person name="Barr L."/>
            <person name="Martin S."/>
            <person name="Wray P."/>
            <person name="Ellington A."/>
            <person name="Matthews N."/>
            <person name="Ellwood M."/>
            <person name="Woodmansey R."/>
            <person name="Clark G."/>
            <person name="Cooper J."/>
            <person name="Tromans A."/>
            <person name="Grafham D."/>
            <person name="Skuce C."/>
            <person name="Pandian R."/>
            <person name="Andrews R."/>
            <person name="Harrison E."/>
            <person name="Kimberley A."/>
            <person name="Garnett J."/>
            <person name="Fosker N."/>
            <person name="Hall R."/>
            <person name="Garner P."/>
            <person name="Kelly D."/>
            <person name="Bird C."/>
            <person name="Palmer S."/>
            <person name="Gehring I."/>
            <person name="Berger A."/>
            <person name="Dooley C.M."/>
            <person name="Ersan-Urun Z."/>
            <person name="Eser C."/>
            <person name="Geiger H."/>
            <person name="Geisler M."/>
            <person name="Karotki L."/>
            <person name="Kirn A."/>
            <person name="Konantz J."/>
            <person name="Konantz M."/>
            <person name="Oberlander M."/>
            <person name="Rudolph-Geiger S."/>
            <person name="Teucke M."/>
            <person name="Lanz C."/>
            <person name="Raddatz G."/>
            <person name="Osoegawa K."/>
            <person name="Zhu B."/>
            <person name="Rapp A."/>
            <person name="Widaa S."/>
            <person name="Langford C."/>
            <person name="Yang F."/>
            <person name="Schuster S.C."/>
            <person name="Carter N.P."/>
            <person name="Harrow J."/>
            <person name="Ning Z."/>
            <person name="Herrero J."/>
            <person name="Searle S.M."/>
            <person name="Enright A."/>
            <person name="Geisler R."/>
            <person name="Plasterk R.H."/>
            <person name="Lee C."/>
            <person name="Westerfield M."/>
            <person name="de Jong P.J."/>
            <person name="Zon L.I."/>
            <person name="Postlethwait J.H."/>
            <person name="Nusslein-Volhard C."/>
            <person name="Hubbard T.J."/>
            <person name="Roest Crollius H."/>
            <person name="Rogers J."/>
            <person name="Stemple D.L."/>
        </authorList>
    </citation>
    <scope>NUCLEOTIDE SEQUENCE [LARGE SCALE GENOMIC DNA]</scope>
    <source>
        <strain>Tuebingen</strain>
    </source>
</reference>
<reference key="2">
    <citation type="submission" date="2006-12" db="EMBL/GenBank/DDBJ databases">
        <authorList>
            <consortium name="NIH - Zebrafish Gene Collection (ZGC) project"/>
        </authorList>
    </citation>
    <scope>NUCLEOTIDE SEQUENCE [LARGE SCALE MRNA]</scope>
    <source>
        <tissue>Embryo</tissue>
    </source>
</reference>
<evidence type="ECO:0000255" key="1">
    <source>
        <dbReference type="PROSITE-ProRule" id="PRU00089"/>
    </source>
</evidence>
<evidence type="ECO:0000256" key="2">
    <source>
        <dbReference type="SAM" id="MobiDB-lite"/>
    </source>
</evidence>
<evidence type="ECO:0000305" key="3"/>
<comment type="subcellular location">
    <subcellularLocation>
        <location evidence="3">Nucleus</location>
    </subcellularLocation>
</comment>
<gene>
    <name type="primary">foxf1</name>
    <name type="ORF">si:dkey-199i24.2</name>
    <name type="ORF">zgc:158301</name>
</gene>
<name>FOXF1_DANRE</name>
<feature type="chain" id="PRO_0000375225" description="Forkhead box protein F1">
    <location>
        <begin position="1"/>
        <end position="380"/>
    </location>
</feature>
<feature type="DNA-binding region" description="Fork-head" evidence="1">
    <location>
        <begin position="52"/>
        <end position="146"/>
    </location>
</feature>
<feature type="region of interest" description="Disordered" evidence="2">
    <location>
        <begin position="1"/>
        <end position="49"/>
    </location>
</feature>
<feature type="compositionally biased region" description="Polar residues" evidence="2">
    <location>
        <begin position="1"/>
        <end position="19"/>
    </location>
</feature>